<organism>
    <name type="scientific">Oryza sativa</name>
    <name type="common">Rice</name>
    <dbReference type="NCBI Taxonomy" id="4530"/>
    <lineage>
        <taxon>Eukaryota</taxon>
        <taxon>Viridiplantae</taxon>
        <taxon>Streptophyta</taxon>
        <taxon>Embryophyta</taxon>
        <taxon>Tracheophyta</taxon>
        <taxon>Spermatophyta</taxon>
        <taxon>Magnoliopsida</taxon>
        <taxon>Liliopsida</taxon>
        <taxon>Poales</taxon>
        <taxon>Poaceae</taxon>
        <taxon>BOP clade</taxon>
        <taxon>Oryzoideae</taxon>
        <taxon>Oryzeae</taxon>
        <taxon>Oryzinae</taxon>
        <taxon>Oryza</taxon>
    </lineage>
</organism>
<sequence length="34" mass="3783">MEVNILAFIATALFILVPTAFLLIIYVKTVSQND</sequence>
<protein>
    <recommendedName>
        <fullName evidence="1">Photosystem II reaction center protein M</fullName>
        <shortName evidence="1">PSII-M</shortName>
    </recommendedName>
</protein>
<keyword id="KW-0150">Chloroplast</keyword>
<keyword id="KW-0472">Membrane</keyword>
<keyword id="KW-0602">Photosynthesis</keyword>
<keyword id="KW-0604">Photosystem II</keyword>
<keyword id="KW-0934">Plastid</keyword>
<keyword id="KW-0674">Reaction center</keyword>
<keyword id="KW-0793">Thylakoid</keyword>
<keyword id="KW-0812">Transmembrane</keyword>
<keyword id="KW-1133">Transmembrane helix</keyword>
<dbReference type="EMBL" id="AY522331">
    <property type="protein sequence ID" value="AAS46173.1"/>
    <property type="status" value="ALT_INIT"/>
    <property type="molecule type" value="Genomic_DNA"/>
</dbReference>
<dbReference type="RefSeq" id="YP_009305292.1">
    <property type="nucleotide sequence ID" value="NC_031333.1"/>
</dbReference>
<dbReference type="SMR" id="P0C411"/>
<dbReference type="GeneID" id="29141348"/>
<dbReference type="GO" id="GO:0009535">
    <property type="term" value="C:chloroplast thylakoid membrane"/>
    <property type="evidence" value="ECO:0007669"/>
    <property type="project" value="UniProtKB-SubCell"/>
</dbReference>
<dbReference type="GO" id="GO:0009523">
    <property type="term" value="C:photosystem II"/>
    <property type="evidence" value="ECO:0007669"/>
    <property type="project" value="UniProtKB-KW"/>
</dbReference>
<dbReference type="GO" id="GO:0009536">
    <property type="term" value="C:plastid"/>
    <property type="evidence" value="ECO:0000305"/>
    <property type="project" value="Gramene"/>
</dbReference>
<dbReference type="GO" id="GO:0019684">
    <property type="term" value="P:photosynthesis, light reaction"/>
    <property type="evidence" value="ECO:0007669"/>
    <property type="project" value="InterPro"/>
</dbReference>
<dbReference type="HAMAP" id="MF_00438">
    <property type="entry name" value="PSII_PsbM"/>
    <property type="match status" value="1"/>
</dbReference>
<dbReference type="InterPro" id="IPR007826">
    <property type="entry name" value="PSII_PsbM"/>
</dbReference>
<dbReference type="InterPro" id="IPR037269">
    <property type="entry name" value="PSII_PsbM_sf"/>
</dbReference>
<dbReference type="NCBIfam" id="TIGR03038">
    <property type="entry name" value="PS_II_psbM"/>
    <property type="match status" value="1"/>
</dbReference>
<dbReference type="PANTHER" id="PTHR35774">
    <property type="entry name" value="PHOTOSYSTEM II REACTION CENTER PROTEIN M"/>
    <property type="match status" value="1"/>
</dbReference>
<dbReference type="PANTHER" id="PTHR35774:SF1">
    <property type="entry name" value="PHOTOSYSTEM II REACTION CENTER PROTEIN M"/>
    <property type="match status" value="1"/>
</dbReference>
<dbReference type="Pfam" id="PF05151">
    <property type="entry name" value="PsbM"/>
    <property type="match status" value="1"/>
</dbReference>
<dbReference type="SUPFAM" id="SSF161033">
    <property type="entry name" value="Photosystem II reaction center protein M, PsbM"/>
    <property type="match status" value="1"/>
</dbReference>
<proteinExistence type="inferred from homology"/>
<feature type="chain" id="PRO_0000217566" description="Photosystem II reaction center protein M">
    <location>
        <begin position="1"/>
        <end position="34"/>
    </location>
</feature>
<feature type="transmembrane region" description="Helical" evidence="1">
    <location>
        <begin position="5"/>
        <end position="25"/>
    </location>
</feature>
<name>PSBM_ORYSA</name>
<gene>
    <name evidence="1" type="primary">psbM</name>
    <name type="ORF">PA029</name>
</gene>
<reference key="1">
    <citation type="journal article" date="2004" name="Plant Physiol.">
        <title>A comparison of rice chloroplast genomes.</title>
        <authorList>
            <person name="Tang J."/>
            <person name="Xia H."/>
            <person name="Cao M."/>
            <person name="Zhang X."/>
            <person name="Zeng W."/>
            <person name="Hu S."/>
            <person name="Tong W."/>
            <person name="Wang J."/>
            <person name="Wang J."/>
            <person name="Yu J."/>
            <person name="Yang H."/>
            <person name="Zhu L."/>
        </authorList>
    </citation>
    <scope>NUCLEOTIDE SEQUENCE [LARGE SCALE GENOMIC DNA]</scope>
    <source>
        <strain>cv. PA64s</strain>
    </source>
</reference>
<evidence type="ECO:0000255" key="1">
    <source>
        <dbReference type="HAMAP-Rule" id="MF_00438"/>
    </source>
</evidence>
<evidence type="ECO:0000305" key="2"/>
<comment type="function">
    <text evidence="1">One of the components of the core complex of photosystem II (PSII). PSII is a light-driven water:plastoquinone oxidoreductase that uses light energy to abstract electrons from H(2)O, generating O(2) and a proton gradient subsequently used for ATP formation. It consists of a core antenna complex that captures photons, and an electron transfer chain that converts photonic excitation into a charge separation. This subunit is found at the monomer-monomer interface.</text>
</comment>
<comment type="subunit">
    <text evidence="1">PSII is composed of 1 copy each of membrane proteins PsbA, PsbB, PsbC, PsbD, PsbE, PsbF, PsbH, PsbI, PsbJ, PsbK, PsbL, PsbM, PsbT, PsbX, PsbY, PsbZ, Psb30/Ycf12, at least 3 peripheral proteins of the oxygen-evolving complex and a large number of cofactors. It forms dimeric complexes.</text>
</comment>
<comment type="subcellular location">
    <subcellularLocation>
        <location evidence="1">Plastid</location>
        <location evidence="1">Chloroplast thylakoid membrane</location>
        <topology evidence="1">Single-pass membrane protein</topology>
    </subcellularLocation>
</comment>
<comment type="similarity">
    <text evidence="1">Belongs to the PsbM family.</text>
</comment>
<comment type="sequence caution" evidence="2">
    <conflict type="erroneous initiation">
        <sequence resource="EMBL-CDS" id="AAS46173"/>
    </conflict>
    <text>Extended N-terminus.</text>
</comment>
<accession>P0C411</accession>
<accession>P12169</accession>
<accession>P62110</accession>
<accession>Q6QXV8</accession>
<geneLocation type="chloroplast"/>